<gene>
    <name type="primary">LHCGR</name>
</gene>
<protein>
    <recommendedName>
        <fullName>Lutropin-choriogonadotropic hormone receptor</fullName>
        <shortName>LH/CG-R</shortName>
    </recommendedName>
    <alternativeName>
        <fullName>Luteinizing hormone receptor</fullName>
        <shortName>LSH-R</shortName>
    </alternativeName>
</protein>
<organism>
    <name type="scientific">Sus scrofa</name>
    <name type="common">Pig</name>
    <dbReference type="NCBI Taxonomy" id="9823"/>
    <lineage>
        <taxon>Eukaryota</taxon>
        <taxon>Metazoa</taxon>
        <taxon>Chordata</taxon>
        <taxon>Craniata</taxon>
        <taxon>Vertebrata</taxon>
        <taxon>Euteleostomi</taxon>
        <taxon>Mammalia</taxon>
        <taxon>Eutheria</taxon>
        <taxon>Laurasiatheria</taxon>
        <taxon>Artiodactyla</taxon>
        <taxon>Suina</taxon>
        <taxon>Suidae</taxon>
        <taxon>Sus</taxon>
    </lineage>
</organism>
<feature type="signal peptide" evidence="3">
    <location>
        <begin position="1"/>
        <end position="27"/>
    </location>
</feature>
<feature type="chain" id="PRO_0000012782" description="Lutropin-choriogonadotropic hormone receptor">
    <location>
        <begin position="28"/>
        <end position="696"/>
    </location>
</feature>
<feature type="topological domain" description="Extracellular" evidence="3">
    <location>
        <begin position="28"/>
        <end position="358"/>
    </location>
</feature>
<feature type="transmembrane region" description="Helical; Name=1" evidence="3">
    <location>
        <begin position="359"/>
        <end position="386"/>
    </location>
</feature>
<feature type="topological domain" description="Cytoplasmic" evidence="3">
    <location>
        <begin position="387"/>
        <end position="395"/>
    </location>
</feature>
<feature type="transmembrane region" description="Helical; Name=2" evidence="3">
    <location>
        <begin position="396"/>
        <end position="418"/>
    </location>
</feature>
<feature type="topological domain" description="Extracellular" evidence="3">
    <location>
        <begin position="419"/>
        <end position="439"/>
    </location>
</feature>
<feature type="transmembrane region" description="Helical; Name=3" evidence="3">
    <location>
        <begin position="440"/>
        <end position="462"/>
    </location>
</feature>
<feature type="topological domain" description="Cytoplasmic" evidence="3">
    <location>
        <begin position="463"/>
        <end position="482"/>
    </location>
</feature>
<feature type="transmembrane region" description="Helical; Name=4" evidence="3">
    <location>
        <begin position="483"/>
        <end position="505"/>
    </location>
</feature>
<feature type="topological domain" description="Extracellular" evidence="3">
    <location>
        <begin position="506"/>
        <end position="525"/>
    </location>
</feature>
<feature type="transmembrane region" description="Helical; Name=5" evidence="3">
    <location>
        <begin position="526"/>
        <end position="547"/>
    </location>
</feature>
<feature type="topological domain" description="Cytoplasmic" evidence="3">
    <location>
        <begin position="548"/>
        <end position="570"/>
    </location>
</feature>
<feature type="transmembrane region" description="Helical; Name=6" evidence="3">
    <location>
        <begin position="571"/>
        <end position="594"/>
    </location>
</feature>
<feature type="topological domain" description="Extracellular" evidence="3">
    <location>
        <begin position="595"/>
        <end position="605"/>
    </location>
</feature>
<feature type="transmembrane region" description="Helical; Name=7" evidence="3">
    <location>
        <begin position="606"/>
        <end position="626"/>
    </location>
</feature>
<feature type="topological domain" description="Cytoplasmic" evidence="3">
    <location>
        <begin position="627"/>
        <end position="696"/>
    </location>
</feature>
<feature type="repeat" description="LRR 1">
    <location>
        <begin position="122"/>
        <end position="147"/>
    </location>
</feature>
<feature type="repeat" description="LRR 2">
    <location>
        <begin position="149"/>
        <end position="171"/>
    </location>
</feature>
<feature type="repeat" description="LRR 3">
    <location>
        <begin position="172"/>
        <end position="196"/>
    </location>
</feature>
<feature type="repeat" description="LRR 4">
    <location>
        <begin position="198"/>
        <end position="220"/>
    </location>
</feature>
<feature type="repeat" description="LRR 5">
    <location>
        <begin position="221"/>
        <end position="244"/>
    </location>
</feature>
<feature type="repeat" description="LRR 6">
    <location>
        <begin position="250"/>
        <end position="271"/>
    </location>
</feature>
<feature type="modified residue" description="Sulfotyrosine" evidence="2">
    <location>
        <position position="331"/>
    </location>
</feature>
<feature type="lipid moiety-binding region" description="S-palmitoyl cysteine" evidence="1">
    <location>
        <position position="643"/>
    </location>
</feature>
<feature type="lipid moiety-binding region" description="S-palmitoyl cysteine" evidence="1">
    <location>
        <position position="644"/>
    </location>
</feature>
<feature type="glycosylation site" description="N-linked (GlcNAc...) asparagine" evidence="3">
    <location>
        <position position="99"/>
    </location>
</feature>
<feature type="glycosylation site" description="N-linked (GlcNAc...) asparagine" evidence="3">
    <location>
        <position position="174"/>
    </location>
</feature>
<feature type="glycosylation site" description="N-linked (GlcNAc...) asparagine" evidence="3">
    <location>
        <position position="195"/>
    </location>
</feature>
<feature type="glycosylation site" description="N-linked (GlcNAc...) asparagine" evidence="3">
    <location>
        <position position="291"/>
    </location>
</feature>
<feature type="glycosylation site" description="N-linked (GlcNAc...) asparagine" evidence="3">
    <location>
        <position position="299"/>
    </location>
</feature>
<feature type="glycosylation site" description="N-linked (GlcNAc...) asparagine" evidence="3">
    <location>
        <position position="313"/>
    </location>
</feature>
<feature type="disulfide bond" evidence="4">
    <location>
        <begin position="439"/>
        <end position="514"/>
    </location>
</feature>
<feature type="splice variant" id="VSP_001967" description="In isoform D." evidence="5">
    <location>
        <begin position="317"/>
        <end position="628"/>
    </location>
</feature>
<feature type="splice variant" id="VSP_001965" description="In isoform C." evidence="5">
    <original>YSAIFAESELSDWDY</original>
    <variation>SKSRADGYQQRHKDC</variation>
    <location>
        <begin position="317"/>
        <end position="331"/>
    </location>
</feature>
<feature type="splice variant" id="VSP_001963" description="In isoform B." evidence="5">
    <original>YSAIFAESELSDW</original>
    <variation>LLHGALPATHCLS</variation>
    <location>
        <begin position="317"/>
        <end position="329"/>
    </location>
</feature>
<feature type="splice variant" id="VSP_001964" description="In isoform B." evidence="5">
    <location>
        <begin position="330"/>
        <end position="696"/>
    </location>
</feature>
<feature type="splice variant" id="VSP_001966" description="In isoform C." evidence="5">
    <location>
        <begin position="332"/>
        <end position="696"/>
    </location>
</feature>
<proteinExistence type="evidence at transcript level"/>
<comment type="function">
    <text evidence="2">Receptor for lutropin-choriogonadotropic hormone. The activity of this receptor is mediated by G proteins which activate adenylate cyclase.</text>
</comment>
<comment type="subcellular location">
    <subcellularLocation>
        <location evidence="2">Cell membrane</location>
        <topology evidence="2">Multi-pass membrane protein</topology>
    </subcellularLocation>
</comment>
<comment type="alternative products">
    <event type="alternative splicing"/>
    <isoform>
        <id>P16582-1</id>
        <name>A</name>
        <sequence type="displayed"/>
    </isoform>
    <isoform>
        <id>P16582-2</id>
        <name>B</name>
        <sequence type="described" ref="VSP_001963 VSP_001964"/>
    </isoform>
    <isoform>
        <id>P16582-3</id>
        <name>C</name>
        <sequence type="described" ref="VSP_001965 VSP_001966"/>
    </isoform>
    <isoform>
        <id>P16582-4</id>
        <name>D</name>
        <sequence type="described" ref="VSP_001967"/>
    </isoform>
</comment>
<comment type="PTM">
    <text evidence="2">Sulfated.</text>
</comment>
<comment type="similarity">
    <text evidence="4">Belongs to the G-protein coupled receptor 1 family. FSH/LSH/TSH subfamily.</text>
</comment>
<dbReference type="EMBL" id="M29525">
    <property type="protein sequence ID" value="AAA31062.1"/>
    <property type="molecule type" value="mRNA"/>
</dbReference>
<dbReference type="EMBL" id="M29526">
    <property type="protein sequence ID" value="AAA31063.1"/>
    <property type="molecule type" value="mRNA"/>
</dbReference>
<dbReference type="EMBL" id="M29527">
    <property type="protein sequence ID" value="AAA31064.1"/>
    <property type="molecule type" value="mRNA"/>
</dbReference>
<dbReference type="EMBL" id="M29528">
    <property type="protein sequence ID" value="AAA31065.1"/>
    <property type="molecule type" value="mRNA"/>
</dbReference>
<dbReference type="PIR" id="A41344">
    <property type="entry name" value="A41344"/>
</dbReference>
<dbReference type="PIR" id="B41344">
    <property type="entry name" value="B41344"/>
</dbReference>
<dbReference type="PIR" id="C41344">
    <property type="entry name" value="C41344"/>
</dbReference>
<dbReference type="PIR" id="D41344">
    <property type="entry name" value="D41344"/>
</dbReference>
<dbReference type="RefSeq" id="NP_999614.1">
    <molecule id="P16582-1"/>
    <property type="nucleotide sequence ID" value="NM_214449.1"/>
</dbReference>
<dbReference type="RefSeq" id="XP_020941546.1">
    <molecule id="P16582-3"/>
    <property type="nucleotide sequence ID" value="XM_021085887.1"/>
</dbReference>
<dbReference type="SMR" id="P16582"/>
<dbReference type="FunCoup" id="P16582">
    <property type="interactions" value="169"/>
</dbReference>
<dbReference type="STRING" id="9823.ENSSSCP00000008988"/>
<dbReference type="GlyCosmos" id="P16582">
    <property type="glycosylation" value="6 sites, No reported glycans"/>
</dbReference>
<dbReference type="GlyGen" id="P16582">
    <property type="glycosylation" value="6 sites"/>
</dbReference>
<dbReference type="Ensembl" id="ENSSSCT00000009222.3">
    <molecule id="P16582-1"/>
    <property type="protein sequence ID" value="ENSSSCP00000008988.3"/>
    <property type="gene ID" value="ENSSSCG00000008421.5"/>
</dbReference>
<dbReference type="Ensembl" id="ENSSSCT00025064230.1">
    <molecule id="P16582-1"/>
    <property type="protein sequence ID" value="ENSSSCP00025027355.1"/>
    <property type="gene ID" value="ENSSSCG00025047035.1"/>
</dbReference>
<dbReference type="Ensembl" id="ENSSSCT00045051839.1">
    <molecule id="P16582-1"/>
    <property type="protein sequence ID" value="ENSSSCP00045036075.1"/>
    <property type="gene ID" value="ENSSSCG00045030248.1"/>
</dbReference>
<dbReference type="Ensembl" id="ENSSSCT00055038309.1">
    <molecule id="P16582-1"/>
    <property type="protein sequence ID" value="ENSSSCP00055030435.1"/>
    <property type="gene ID" value="ENSSSCG00055019461.1"/>
</dbReference>
<dbReference type="Ensembl" id="ENSSSCT00060033796.1">
    <molecule id="P16582-1"/>
    <property type="protein sequence ID" value="ENSSSCP00060014472.1"/>
    <property type="gene ID" value="ENSSSCG00060024924.1"/>
</dbReference>
<dbReference type="Ensembl" id="ENSSSCT00065044915.1">
    <molecule id="P16582-1"/>
    <property type="protein sequence ID" value="ENSSSCP00065019221.1"/>
    <property type="gene ID" value="ENSSSCG00065033063.1"/>
</dbReference>
<dbReference type="Ensembl" id="ENSSSCT00090052283">
    <molecule id="P16582-1"/>
    <property type="protein sequence ID" value="ENSSSCP00090032579"/>
    <property type="gene ID" value="ENSSSCG00090029485"/>
</dbReference>
<dbReference type="Ensembl" id="ENSSSCT00105016419">
    <molecule id="P16582-1"/>
    <property type="protein sequence ID" value="ENSSSCP00105011686"/>
    <property type="gene ID" value="ENSSSCG00105008203"/>
</dbReference>
<dbReference type="Ensembl" id="ENSSSCT00110003077">
    <molecule id="P16582-1"/>
    <property type="protein sequence ID" value="ENSSSCP00110002411"/>
    <property type="gene ID" value="ENSSSCG00110001455"/>
</dbReference>
<dbReference type="Ensembl" id="ENSSSCT00115016164">
    <molecule id="P16582-1"/>
    <property type="protein sequence ID" value="ENSSSCP00115015240"/>
    <property type="gene ID" value="ENSSSCG00115009248"/>
</dbReference>
<dbReference type="GeneID" id="407247"/>
<dbReference type="KEGG" id="ssc:407247"/>
<dbReference type="CTD" id="3973"/>
<dbReference type="eggNOG" id="KOG2087">
    <property type="taxonomic scope" value="Eukaryota"/>
</dbReference>
<dbReference type="GeneTree" id="ENSGT00940000157364"/>
<dbReference type="InParanoid" id="P16582"/>
<dbReference type="OMA" id="ASRCKLT"/>
<dbReference type="OrthoDB" id="5981530at2759"/>
<dbReference type="Reactome" id="R-SSC-375281">
    <property type="pathway name" value="Hormone ligand-binding receptors"/>
</dbReference>
<dbReference type="Reactome" id="R-SSC-418555">
    <property type="pathway name" value="G alpha (s) signalling events"/>
</dbReference>
<dbReference type="Proteomes" id="UP000008227">
    <property type="component" value="Chromosome 3"/>
</dbReference>
<dbReference type="Proteomes" id="UP000314985">
    <property type="component" value="Unplaced"/>
</dbReference>
<dbReference type="Proteomes" id="UP000694570">
    <property type="component" value="Unplaced"/>
</dbReference>
<dbReference type="Proteomes" id="UP000694571">
    <property type="component" value="Unplaced"/>
</dbReference>
<dbReference type="Proteomes" id="UP000694720">
    <property type="component" value="Unplaced"/>
</dbReference>
<dbReference type="Proteomes" id="UP000694722">
    <property type="component" value="Unplaced"/>
</dbReference>
<dbReference type="Proteomes" id="UP000694723">
    <property type="component" value="Unplaced"/>
</dbReference>
<dbReference type="Proteomes" id="UP000694724">
    <property type="component" value="Unplaced"/>
</dbReference>
<dbReference type="Proteomes" id="UP000694725">
    <property type="component" value="Unplaced"/>
</dbReference>
<dbReference type="Proteomes" id="UP000694726">
    <property type="component" value="Unplaced"/>
</dbReference>
<dbReference type="Proteomes" id="UP000694727">
    <property type="component" value="Unplaced"/>
</dbReference>
<dbReference type="Proteomes" id="UP000694728">
    <property type="component" value="Unplaced"/>
</dbReference>
<dbReference type="Bgee" id="ENSSSCG00000008421">
    <property type="expression patterns" value="Expressed in ovary and 14 other cell types or tissues"/>
</dbReference>
<dbReference type="ExpressionAtlas" id="P16582">
    <property type="expression patterns" value="baseline and differential"/>
</dbReference>
<dbReference type="GO" id="GO:0034451">
    <property type="term" value="C:centriolar satellite"/>
    <property type="evidence" value="ECO:0007669"/>
    <property type="project" value="Ensembl"/>
</dbReference>
<dbReference type="GO" id="GO:0005886">
    <property type="term" value="C:plasma membrane"/>
    <property type="evidence" value="ECO:0000250"/>
    <property type="project" value="UniProtKB"/>
</dbReference>
<dbReference type="GO" id="GO:0038106">
    <property type="term" value="F:choriogonadotropin hormone binding"/>
    <property type="evidence" value="ECO:0007669"/>
    <property type="project" value="Ensembl"/>
</dbReference>
<dbReference type="GO" id="GO:0035472">
    <property type="term" value="F:choriogonadotropin hormone receptor activity"/>
    <property type="evidence" value="ECO:0007669"/>
    <property type="project" value="Ensembl"/>
</dbReference>
<dbReference type="GO" id="GO:0008528">
    <property type="term" value="F:G protein-coupled peptide receptor activity"/>
    <property type="evidence" value="ECO:0000318"/>
    <property type="project" value="GO_Central"/>
</dbReference>
<dbReference type="GO" id="GO:0004964">
    <property type="term" value="F:luteinizing hormone receptor activity"/>
    <property type="evidence" value="ECO:0000250"/>
    <property type="project" value="UniProtKB"/>
</dbReference>
<dbReference type="GO" id="GO:0007189">
    <property type="term" value="P:adenylate cyclase-activating G protein-coupled receptor signaling pathway"/>
    <property type="evidence" value="ECO:0000318"/>
    <property type="project" value="GO_Central"/>
</dbReference>
<dbReference type="GO" id="GO:0071373">
    <property type="term" value="P:cellular response to luteinizing hormone stimulus"/>
    <property type="evidence" value="ECO:0000250"/>
    <property type="project" value="UniProtKB"/>
</dbReference>
<dbReference type="GO" id="GO:0050890">
    <property type="term" value="P:cognition"/>
    <property type="evidence" value="ECO:0007669"/>
    <property type="project" value="Ensembl"/>
</dbReference>
<dbReference type="GO" id="GO:0046544">
    <property type="term" value="P:development of secondary male sexual characteristics"/>
    <property type="evidence" value="ECO:0007669"/>
    <property type="project" value="Ensembl"/>
</dbReference>
<dbReference type="GO" id="GO:0009755">
    <property type="term" value="P:hormone-mediated signaling pathway"/>
    <property type="evidence" value="ECO:0000318"/>
    <property type="project" value="GO_Central"/>
</dbReference>
<dbReference type="GO" id="GO:0042700">
    <property type="term" value="P:luteinizing hormone signaling pathway"/>
    <property type="evidence" value="ECO:0000250"/>
    <property type="project" value="UniProtKB"/>
</dbReference>
<dbReference type="GO" id="GO:0008584">
    <property type="term" value="P:male gonad development"/>
    <property type="evidence" value="ECO:0000318"/>
    <property type="project" value="GO_Central"/>
</dbReference>
<dbReference type="GO" id="GO:0001541">
    <property type="term" value="P:ovarian follicle development"/>
    <property type="evidence" value="ECO:0000318"/>
    <property type="project" value="GO_Central"/>
</dbReference>
<dbReference type="GO" id="GO:0022602">
    <property type="term" value="P:ovulation cycle process"/>
    <property type="evidence" value="ECO:0000318"/>
    <property type="project" value="GO_Central"/>
</dbReference>
<dbReference type="GO" id="GO:0007200">
    <property type="term" value="P:phospholipase C-activating G protein-coupled receptor signaling pathway"/>
    <property type="evidence" value="ECO:0000318"/>
    <property type="project" value="GO_Central"/>
</dbReference>
<dbReference type="GO" id="GO:0032962">
    <property type="term" value="P:positive regulation of inositol trisphosphate biosynthetic process"/>
    <property type="evidence" value="ECO:0007669"/>
    <property type="project" value="Ensembl"/>
</dbReference>
<dbReference type="GO" id="GO:0090030">
    <property type="term" value="P:regulation of steroid hormone biosynthetic process"/>
    <property type="evidence" value="ECO:0007669"/>
    <property type="project" value="Ensembl"/>
</dbReference>
<dbReference type="GO" id="GO:0072520">
    <property type="term" value="P:seminiferous tubule development"/>
    <property type="evidence" value="ECO:0007669"/>
    <property type="project" value="Ensembl"/>
</dbReference>
<dbReference type="GO" id="GO:0007283">
    <property type="term" value="P:spermatogenesis"/>
    <property type="evidence" value="ECO:0007669"/>
    <property type="project" value="Ensembl"/>
</dbReference>
<dbReference type="GO" id="GO:0060065">
    <property type="term" value="P:uterus development"/>
    <property type="evidence" value="ECO:0007669"/>
    <property type="project" value="Ensembl"/>
</dbReference>
<dbReference type="CDD" id="cd15359">
    <property type="entry name" value="7tmA_LHCGR"/>
    <property type="match status" value="1"/>
</dbReference>
<dbReference type="FunFam" id="1.20.1070.10:FF:000019">
    <property type="entry name" value="Lutropin-choriogonadotropic hormone receptor"/>
    <property type="match status" value="1"/>
</dbReference>
<dbReference type="FunFam" id="3.80.10.10:FF:000128">
    <property type="entry name" value="Lutropin-choriogonadotropic hormone receptor"/>
    <property type="match status" value="1"/>
</dbReference>
<dbReference type="Gene3D" id="1.20.1070.10">
    <property type="entry name" value="Rhodopsin 7-helix transmembrane proteins"/>
    <property type="match status" value="1"/>
</dbReference>
<dbReference type="Gene3D" id="3.80.10.10">
    <property type="entry name" value="Ribonuclease Inhibitor"/>
    <property type="match status" value="1"/>
</dbReference>
<dbReference type="InterPro" id="IPR000276">
    <property type="entry name" value="GPCR_Rhodpsn"/>
</dbReference>
<dbReference type="InterPro" id="IPR017452">
    <property type="entry name" value="GPCR_Rhodpsn_7TM"/>
</dbReference>
<dbReference type="InterPro" id="IPR002131">
    <property type="entry name" value="Gphrmn_rcpt_fam"/>
</dbReference>
<dbReference type="InterPro" id="IPR026906">
    <property type="entry name" value="LRR_5"/>
</dbReference>
<dbReference type="InterPro" id="IPR032675">
    <property type="entry name" value="LRR_dom_sf"/>
</dbReference>
<dbReference type="InterPro" id="IPR002273">
    <property type="entry name" value="LSH_rcpt"/>
</dbReference>
<dbReference type="PANTHER" id="PTHR24372">
    <property type="entry name" value="GLYCOPROTEIN HORMONE RECEPTOR"/>
    <property type="match status" value="1"/>
</dbReference>
<dbReference type="PANTHER" id="PTHR24372:SF1">
    <property type="entry name" value="LUTROPIN-CHORIOGONADOTROPIC HORMONE RECEPTOR"/>
    <property type="match status" value="1"/>
</dbReference>
<dbReference type="Pfam" id="PF00001">
    <property type="entry name" value="7tm_1"/>
    <property type="match status" value="1"/>
</dbReference>
<dbReference type="Pfam" id="PF13306">
    <property type="entry name" value="LRR_5"/>
    <property type="match status" value="2"/>
</dbReference>
<dbReference type="PRINTS" id="PR00373">
    <property type="entry name" value="GLYCHORMONER"/>
</dbReference>
<dbReference type="PRINTS" id="PR00237">
    <property type="entry name" value="GPCRRHODOPSN"/>
</dbReference>
<dbReference type="PRINTS" id="PR01144">
    <property type="entry name" value="LSHRECEPTOR"/>
</dbReference>
<dbReference type="SUPFAM" id="SSF81321">
    <property type="entry name" value="Family A G protein-coupled receptor-like"/>
    <property type="match status" value="1"/>
</dbReference>
<dbReference type="SUPFAM" id="SSF52058">
    <property type="entry name" value="L domain-like"/>
    <property type="match status" value="1"/>
</dbReference>
<dbReference type="PROSITE" id="PS00237">
    <property type="entry name" value="G_PROTEIN_RECEP_F1_1"/>
    <property type="match status" value="1"/>
</dbReference>
<dbReference type="PROSITE" id="PS50262">
    <property type="entry name" value="G_PROTEIN_RECEP_F1_2"/>
    <property type="match status" value="1"/>
</dbReference>
<accession>P16582</accession>
<keyword id="KW-0025">Alternative splicing</keyword>
<keyword id="KW-1003">Cell membrane</keyword>
<keyword id="KW-1015">Disulfide bond</keyword>
<keyword id="KW-0297">G-protein coupled receptor</keyword>
<keyword id="KW-0325">Glycoprotein</keyword>
<keyword id="KW-0433">Leucine-rich repeat</keyword>
<keyword id="KW-0449">Lipoprotein</keyword>
<keyword id="KW-0472">Membrane</keyword>
<keyword id="KW-0564">Palmitate</keyword>
<keyword id="KW-0675">Receptor</keyword>
<keyword id="KW-1185">Reference proteome</keyword>
<keyword id="KW-0677">Repeat</keyword>
<keyword id="KW-0732">Signal</keyword>
<keyword id="KW-0765">Sulfation</keyword>
<keyword id="KW-0807">Transducer</keyword>
<keyword id="KW-0812">Transmembrane</keyword>
<keyword id="KW-1133">Transmembrane helix</keyword>
<reference key="1">
    <citation type="journal article" date="1989" name="Science">
        <title>Cloning and sequencing of porcine LH-hCG receptor cDNA: variants lacking transmembrane domain.</title>
        <authorList>
            <person name="Loosfelt H."/>
            <person name="Misrahi M."/>
            <person name="Atger M."/>
            <person name="Salesse R."/>
            <person name="Thi M.T.V.H.-L."/>
            <person name="Jolivet A."/>
            <person name="Guiochon-Mantel A."/>
            <person name="Sar S."/>
            <person name="Jallal B."/>
            <person name="Garnier J."/>
            <person name="Milgrom E."/>
        </authorList>
    </citation>
    <scope>NUCLEOTIDE SEQUENCE [MRNA] (ISOFORMS A; B; C AND D)</scope>
</reference>
<evidence type="ECO:0000250" key="1"/>
<evidence type="ECO:0000250" key="2">
    <source>
        <dbReference type="UniProtKB" id="P22888"/>
    </source>
</evidence>
<evidence type="ECO:0000255" key="3"/>
<evidence type="ECO:0000255" key="4">
    <source>
        <dbReference type="PROSITE-ProRule" id="PRU00521"/>
    </source>
</evidence>
<evidence type="ECO:0000303" key="5">
    <source>
    </source>
</evidence>
<name>LSHR_PIG</name>
<sequence>MRRRSLALRLLLALLLLPPPLPQTLLGAPCPEPCSCRPDGALRCPGPRAGLSRLSLTYLPIKVIPSQAFRGLNEVVKIEISQSDSLEKIEANAFDNLLNLSEILIQNTKNLVYIEPGAFTNLPRLKYLSICNTGIRKLPDVTKIFSSEFNFILEICDNLHITTVPANAFQGMNNESITLKLYGNGFEEIQSHAFNGTTLISLELKENAHLKKMHNDAFRGARGPSILDISSTKLQALPSYGLESIQTLIATSSYSLKKLPSREKFTNLLDATLTYPSHCCAFRNLPTKEQNFSFSIFKNFSKQCESTARRPNNETLYSAIFAESELSDWDYDYGFCSPKTLQCAPEPDAFNPCEDIMGYDFLRVLIWLINILAIMGNVTVLFVLLTSHYKLTVPRFLMCNLSFADFCMGLYLLLIASVDAQTKGQYYNHAIDWQTGNGCSVAGFFTVFASELSVYTLTVITLERWHTITYAIQLDQKLRLRHAIPIMLGGWLFSTLIAMLPLVGVSSYMKVSICLPMDVETTLSQVYILTILILNVVAFIIICACYIKIYFAVQNPELMATNKDTKIAKKMAVLIFTDFTCMAPISFFAISAALKVPLITVTNSKVLLVLFYPVNSCANPFLYAIFTKAFRRDFFLLLSKSGCCKHQAELYRRKDFSAYCKNGFTGSNKPSRSTLKLTTLQCQYSTVMDKTCYKDC</sequence>